<reference key="1">
    <citation type="journal article" date="1994" name="Eur. J. Biochem.">
        <title>Structures of heat-stable and unstable homologues of the sweet protein mabinlin. The difference in the heat stability is due to replacement of a single amino acid residue.</title>
        <authorList>
            <person name="Nirasawa S."/>
            <person name="Nishino T."/>
            <person name="Katahira M."/>
            <person name="Uesugi S."/>
            <person name="Hu Z."/>
            <person name="Kurihara Y."/>
        </authorList>
    </citation>
    <scope>PROTEIN SEQUENCE</scope>
    <source>
        <tissue>Seed</tissue>
    </source>
</reference>
<name>2SS3_CAPMA</name>
<feature type="chain" id="PRO_0000032142" description="Sweet protein mabinlin-3 chain A">
    <location>
        <begin position="1"/>
        <end position="32"/>
    </location>
</feature>
<feature type="chain" id="PRO_0000032143" description="Sweet protein mabinlin-3 chain B">
    <location>
        <begin position="33"/>
        <end position="104"/>
    </location>
</feature>
<feature type="disulfide bond">
    <location>
        <begin position="4"/>
        <end position="53"/>
    </location>
</feature>
<feature type="disulfide bond">
    <location>
        <begin position="17"/>
        <end position="42"/>
    </location>
</feature>
<feature type="disulfide bond">
    <location>
        <begin position="43"/>
        <end position="91"/>
    </location>
</feature>
<feature type="disulfide bond">
    <location>
        <begin position="55"/>
        <end position="99"/>
    </location>
</feature>
<feature type="non-consecutive residues" evidence="1">
    <location>
        <begin position="32"/>
        <end position="33"/>
    </location>
</feature>
<keyword id="KW-0903">Direct protein sequencing</keyword>
<keyword id="KW-1015">Disulfide bond</keyword>
<keyword id="KW-0708">Seed storage protein</keyword>
<keyword id="KW-0758">Storage protein</keyword>
<keyword id="KW-0776">Taste-modifying protein</keyword>
<accession>P80352</accession>
<sequence length="104" mass="12284">EPLCRRQFQQHQHLRACQRYLRRRAQRGGLADEQRGPALRLCCNQLRQVNKPCVCPVLRQAAHQQLYQGQIEGPRQVRRLFRAARNLPNICKIPAVGRCQFTRW</sequence>
<comment type="function">
    <text>Heat stable 2S seed storage protein having sweetness-inducing activity.</text>
</comment>
<comment type="subunit">
    <text>Heterodimer of a small A and a large B chain linked by disulfide bonds.</text>
</comment>
<comment type="similarity">
    <text evidence="1">Belongs to the 2S seed storage albumins family.</text>
</comment>
<organism>
    <name type="scientific">Capparis masaikai</name>
    <name type="common">Mabinlang</name>
    <dbReference type="NCBI Taxonomy" id="13395"/>
    <lineage>
        <taxon>Eukaryota</taxon>
        <taxon>Viridiplantae</taxon>
        <taxon>Streptophyta</taxon>
        <taxon>Embryophyta</taxon>
        <taxon>Tracheophyta</taxon>
        <taxon>Spermatophyta</taxon>
        <taxon>Magnoliopsida</taxon>
        <taxon>eudicotyledons</taxon>
        <taxon>Gunneridae</taxon>
        <taxon>Pentapetalae</taxon>
        <taxon>rosids</taxon>
        <taxon>malvids</taxon>
        <taxon>Brassicales</taxon>
        <taxon>Capparaceae</taxon>
        <taxon>Capparis</taxon>
    </lineage>
</organism>
<proteinExistence type="evidence at protein level"/>
<evidence type="ECO:0000305" key="1"/>
<protein>
    <recommendedName>
        <fullName>Sweet protein mabinlin-3</fullName>
    </recommendedName>
    <alternativeName>
        <fullName>Mabinlin III</fullName>
        <shortName>MAB III</shortName>
    </alternativeName>
    <component>
        <recommendedName>
            <fullName>Sweet protein mabinlin-3 chain A</fullName>
        </recommendedName>
    </component>
    <component>
        <recommendedName>
            <fullName>Sweet protein mabinlin-3 chain B</fullName>
        </recommendedName>
    </component>
</protein>
<dbReference type="PIR" id="S48178">
    <property type="entry name" value="S48178"/>
</dbReference>
<dbReference type="SMR" id="P80352"/>
<dbReference type="GO" id="GO:0045735">
    <property type="term" value="F:nutrient reservoir activity"/>
    <property type="evidence" value="ECO:0007669"/>
    <property type="project" value="UniProtKB-KW"/>
</dbReference>
<dbReference type="CDD" id="cd00261">
    <property type="entry name" value="AAI_SS"/>
    <property type="match status" value="1"/>
</dbReference>
<dbReference type="Gene3D" id="1.10.110.10">
    <property type="entry name" value="Plant lipid-transfer and hydrophobic proteins"/>
    <property type="match status" value="1"/>
</dbReference>
<dbReference type="InterPro" id="IPR036312">
    <property type="entry name" value="Bifun_inhib/LTP/seed_sf"/>
</dbReference>
<dbReference type="InterPro" id="IPR016140">
    <property type="entry name" value="Bifunc_inhib/LTP/seed_store"/>
</dbReference>
<dbReference type="InterPro" id="IPR000617">
    <property type="entry name" value="Napin/2SS/CON"/>
</dbReference>
<dbReference type="PANTHER" id="PTHR35496">
    <property type="entry name" value="2S SEED STORAGE PROTEIN 1-RELATED"/>
    <property type="match status" value="1"/>
</dbReference>
<dbReference type="PANTHER" id="PTHR35496:SF20">
    <property type="entry name" value="2S SEED STORAGE PROTEIN 1-RELATED"/>
    <property type="match status" value="1"/>
</dbReference>
<dbReference type="Pfam" id="PF00234">
    <property type="entry name" value="Tryp_alpha_amyl"/>
    <property type="match status" value="1"/>
</dbReference>
<dbReference type="PRINTS" id="PR00496">
    <property type="entry name" value="NAPIN"/>
</dbReference>
<dbReference type="SMART" id="SM00499">
    <property type="entry name" value="AAI"/>
    <property type="match status" value="1"/>
</dbReference>
<dbReference type="SUPFAM" id="SSF47699">
    <property type="entry name" value="Bifunctional inhibitor/lipid-transfer protein/seed storage 2S albumin"/>
    <property type="match status" value="1"/>
</dbReference>